<protein>
    <recommendedName>
        <fullName>Probable protein E5</fullName>
    </recommendedName>
</protein>
<reference key="1">
    <citation type="journal article" date="1987" name="J. Mol. Biol.">
        <title>Nucleotide sequence and comparative analysis of the human papillomavirus type 18 genome. Phylogeny of papillomaviruses and repeated structure of the E6 and E7 gene products.</title>
        <authorList>
            <person name="Cole S.T."/>
            <person name="Danos O."/>
        </authorList>
    </citation>
    <scope>NUCLEOTIDE SEQUENCE [GENOMIC DNA]</scope>
</reference>
<evidence type="ECO:0000305" key="1"/>
<gene>
    <name type="primary">E5</name>
</gene>
<accession>P06792</accession>
<dbReference type="EMBL" id="X05015">
    <property type="protein sequence ID" value="CAA28669.1"/>
    <property type="molecule type" value="Genomic_DNA"/>
</dbReference>
<dbReference type="PIR" id="F26251">
    <property type="entry name" value="W5WL18"/>
</dbReference>
<dbReference type="RefSeq" id="NP_040315.1">
    <property type="nucleotide sequence ID" value="NC_001357.1"/>
</dbReference>
<dbReference type="IntAct" id="P06792">
    <property type="interactions" value="259"/>
</dbReference>
<dbReference type="MINT" id="P06792"/>
<dbReference type="DNASU" id="1489087"/>
<dbReference type="GeneID" id="1489087"/>
<dbReference type="KEGG" id="vg:1489087"/>
<dbReference type="Proteomes" id="UP000009109">
    <property type="component" value="Genome"/>
</dbReference>
<dbReference type="InterPro" id="IPR004270">
    <property type="entry name" value="Papilloma_E5_alpha"/>
</dbReference>
<dbReference type="Pfam" id="PF03025">
    <property type="entry name" value="Papilloma_E5"/>
    <property type="match status" value="1"/>
</dbReference>
<keyword id="KW-0244">Early protein</keyword>
<keyword id="KW-1185">Reference proteome</keyword>
<sequence length="73" mass="8299">MLSLIFLFCFCVCMYVCCHVPLLPSVCMCAYAWVLVFVYIVVITSPATAFTVYVFCFLLPMLLLHIHAILSLQ</sequence>
<comment type="similarity">
    <text evidence="1">Belongs to the papillomaviridae E5 protein family.</text>
</comment>
<organismHost>
    <name type="scientific">Homo sapiens</name>
    <name type="common">Human</name>
    <dbReference type="NCBI Taxonomy" id="9606"/>
</organismHost>
<feature type="chain" id="PRO_0000133290" description="Probable protein E5">
    <location>
        <begin position="1"/>
        <end position="73"/>
    </location>
</feature>
<name>VE5_HPV18</name>
<organism>
    <name type="scientific">Human papillomavirus type 18</name>
    <dbReference type="NCBI Taxonomy" id="333761"/>
    <lineage>
        <taxon>Viruses</taxon>
        <taxon>Monodnaviria</taxon>
        <taxon>Shotokuvirae</taxon>
        <taxon>Cossaviricota</taxon>
        <taxon>Papovaviricetes</taxon>
        <taxon>Zurhausenvirales</taxon>
        <taxon>Papillomaviridae</taxon>
        <taxon>Firstpapillomavirinae</taxon>
        <taxon>Alphapapillomavirus</taxon>
        <taxon>Alphapapillomavirus 7</taxon>
    </lineage>
</organism>
<proteinExistence type="inferred from homology"/>